<reference key="1">
    <citation type="journal article" date="1996" name="Biochemistry">
        <title>Cofactor A is a molecular chaperone required for beta-tubulin folding: functional and structural characterization.</title>
        <authorList>
            <person name="Melki R."/>
            <person name="Rommelaere H."/>
            <person name="Leguy R."/>
            <person name="Vandekerckhove J."/>
            <person name="Ampe C."/>
        </authorList>
    </citation>
    <scope>NUCLEOTIDE SEQUENCE [MRNA]</scope>
    <source>
        <tissue>Testis</tissue>
    </source>
</reference>
<reference key="2">
    <citation type="submission" date="2005-11" db="EMBL/GenBank/DDBJ databases">
        <authorList>
            <consortium name="NIH - Mammalian Gene Collection (MGC) project"/>
        </authorList>
    </citation>
    <scope>NUCLEOTIDE SEQUENCE [LARGE SCALE MRNA]</scope>
    <source>
        <strain>Crossbred X Angus</strain>
        <tissue>Liver</tissue>
    </source>
</reference>
<reference key="3">
    <citation type="journal article" date="1994" name="J. Cell Biol.">
        <title>A novel cochaperonin that modulates the ATPase activity of cytoplasmic chaperonin.</title>
        <authorList>
            <person name="Gao Y."/>
            <person name="Melki R."/>
            <person name="Walden P.D."/>
            <person name="Lewis S.A."/>
            <person name="Ampe C."/>
            <person name="Rommelaere H."/>
            <person name="Vandekerckhove J."/>
            <person name="Cowan N.J."/>
        </authorList>
    </citation>
    <scope>PROTEIN SEQUENCE OF 3-77 AND 87-106</scope>
    <source>
        <tissue>Testis</tissue>
    </source>
</reference>
<sequence>MADPRVRQIKIKTGVVKRLVKEKMMYEKEAKQQEEKIEKMKAEDGENYAIKKQAEILQESRMMIPDCQRRLEAAHTDLLQLLESEKDLEEAEEYKEARLVLDSVKLEA</sequence>
<name>TBCA_BOVIN</name>
<dbReference type="EMBL" id="X97224">
    <property type="protein sequence ID" value="CAA65861.1"/>
    <property type="molecule type" value="mRNA"/>
</dbReference>
<dbReference type="EMBL" id="BC109909">
    <property type="protein sequence ID" value="AAI09910.1"/>
    <property type="molecule type" value="mRNA"/>
</dbReference>
<dbReference type="RefSeq" id="NP_786997.1">
    <property type="nucleotide sequence ID" value="NM_175803.3"/>
</dbReference>
<dbReference type="SMR" id="P48427"/>
<dbReference type="FunCoup" id="P48427">
    <property type="interactions" value="2419"/>
</dbReference>
<dbReference type="STRING" id="9913.ENSBTAP00000004227"/>
<dbReference type="PaxDb" id="9913-ENSBTAP00000004227"/>
<dbReference type="PeptideAtlas" id="P48427"/>
<dbReference type="Ensembl" id="ENSBTAT00000090811.1">
    <property type="protein sequence ID" value="ENSBTAP00000098909.1"/>
    <property type="gene ID" value="ENSBTAG00000003263.7"/>
</dbReference>
<dbReference type="GeneID" id="327683"/>
<dbReference type="KEGG" id="bta:327683"/>
<dbReference type="CTD" id="6902"/>
<dbReference type="VEuPathDB" id="HostDB:ENSBTAG00000003263"/>
<dbReference type="VGNC" id="VGNC:35648">
    <property type="gene designation" value="TBCA"/>
</dbReference>
<dbReference type="eggNOG" id="KOG3470">
    <property type="taxonomic scope" value="Eukaryota"/>
</dbReference>
<dbReference type="GeneTree" id="ENSGT00390000009710"/>
<dbReference type="HOGENOM" id="CLU_130569_1_0_1"/>
<dbReference type="InParanoid" id="P48427"/>
<dbReference type="OMA" id="VIQECIM"/>
<dbReference type="OrthoDB" id="296187at2759"/>
<dbReference type="TreeFam" id="TF313971"/>
<dbReference type="Proteomes" id="UP000009136">
    <property type="component" value="Chromosome 10"/>
</dbReference>
<dbReference type="Bgee" id="ENSBTAG00000003263">
    <property type="expression patterns" value="Expressed in oocyte and 109 other cell types or tissues"/>
</dbReference>
<dbReference type="GO" id="GO:0005829">
    <property type="term" value="C:cytosol"/>
    <property type="evidence" value="ECO:0000304"/>
    <property type="project" value="Reactome"/>
</dbReference>
<dbReference type="GO" id="GO:0005874">
    <property type="term" value="C:microtubule"/>
    <property type="evidence" value="ECO:0007669"/>
    <property type="project" value="UniProtKB-KW"/>
</dbReference>
<dbReference type="GO" id="GO:0015630">
    <property type="term" value="C:microtubule cytoskeleton"/>
    <property type="evidence" value="ECO:0000318"/>
    <property type="project" value="GO_Central"/>
</dbReference>
<dbReference type="GO" id="GO:0048487">
    <property type="term" value="F:beta-tubulin binding"/>
    <property type="evidence" value="ECO:0007669"/>
    <property type="project" value="InterPro"/>
</dbReference>
<dbReference type="GO" id="GO:0015631">
    <property type="term" value="F:tubulin binding"/>
    <property type="evidence" value="ECO:0000318"/>
    <property type="project" value="GO_Central"/>
</dbReference>
<dbReference type="GO" id="GO:0007023">
    <property type="term" value="P:post-chaperonin tubulin folding pathway"/>
    <property type="evidence" value="ECO:0007669"/>
    <property type="project" value="InterPro"/>
</dbReference>
<dbReference type="GO" id="GO:0006457">
    <property type="term" value="P:protein folding"/>
    <property type="evidence" value="ECO:0000318"/>
    <property type="project" value="GO_Central"/>
</dbReference>
<dbReference type="GO" id="GO:0007021">
    <property type="term" value="P:tubulin complex assembly"/>
    <property type="evidence" value="ECO:0000318"/>
    <property type="project" value="GO_Central"/>
</dbReference>
<dbReference type="FunFam" id="1.20.58.90:FF:000009">
    <property type="entry name" value="Tubulin-specific chaperone A"/>
    <property type="match status" value="1"/>
</dbReference>
<dbReference type="Gene3D" id="1.20.58.90">
    <property type="match status" value="1"/>
</dbReference>
<dbReference type="InterPro" id="IPR004226">
    <property type="entry name" value="TBCA"/>
</dbReference>
<dbReference type="InterPro" id="IPR036126">
    <property type="entry name" value="TBCA_sf"/>
</dbReference>
<dbReference type="PANTHER" id="PTHR21500">
    <property type="entry name" value="TUBULIN-SPECIFIC CHAPERONE A"/>
    <property type="match status" value="1"/>
</dbReference>
<dbReference type="PANTHER" id="PTHR21500:SF0">
    <property type="entry name" value="TUBULIN-SPECIFIC CHAPERONE A"/>
    <property type="match status" value="1"/>
</dbReference>
<dbReference type="Pfam" id="PF02970">
    <property type="entry name" value="TBCA"/>
    <property type="match status" value="1"/>
</dbReference>
<dbReference type="SUPFAM" id="SSF46988">
    <property type="entry name" value="Tubulin chaperone cofactor A"/>
    <property type="match status" value="1"/>
</dbReference>
<evidence type="ECO:0000250" key="1">
    <source>
        <dbReference type="UniProtKB" id="P80584"/>
    </source>
</evidence>
<evidence type="ECO:0000305" key="2"/>
<comment type="function">
    <text>Tubulin-folding protein; involved in the early step of the tubulin folding pathway.</text>
</comment>
<comment type="subunit">
    <text>Supercomplex made of cofactors A to E. Cofactors A and D function by capturing and stabilizing tubulin in a quasi-native conformation. Cofactor E binds to the cofactor D-tubulin complex; interaction with cofactor C then causes the release of tubulin polypeptides that are committed to the native state.</text>
</comment>
<comment type="subcellular location">
    <subcellularLocation>
        <location>Cytoplasm</location>
        <location>Cytoskeleton</location>
    </subcellularLocation>
</comment>
<comment type="tissue specificity">
    <text>Widely expressed, but is most abundant in the testis.</text>
</comment>
<comment type="similarity">
    <text evidence="2">Belongs to the TBCA family.</text>
</comment>
<protein>
    <recommendedName>
        <fullName>Tubulin-specific chaperone A</fullName>
    </recommendedName>
    <alternativeName>
        <fullName>TCP1-chaperonin cofactor A</fullName>
    </alternativeName>
    <alternativeName>
        <fullName>Tubulin-folding cofactor A</fullName>
        <shortName>CFA</shortName>
    </alternativeName>
</protein>
<keyword id="KW-0007">Acetylation</keyword>
<keyword id="KW-0143">Chaperone</keyword>
<keyword id="KW-0963">Cytoplasm</keyword>
<keyword id="KW-0206">Cytoskeleton</keyword>
<keyword id="KW-0903">Direct protein sequencing</keyword>
<keyword id="KW-0493">Microtubule</keyword>
<keyword id="KW-1185">Reference proteome</keyword>
<accession>P48427</accession>
<accession>Q32KV5</accession>
<proteinExistence type="evidence at protein level"/>
<organism>
    <name type="scientific">Bos taurus</name>
    <name type="common">Bovine</name>
    <dbReference type="NCBI Taxonomy" id="9913"/>
    <lineage>
        <taxon>Eukaryota</taxon>
        <taxon>Metazoa</taxon>
        <taxon>Chordata</taxon>
        <taxon>Craniata</taxon>
        <taxon>Vertebrata</taxon>
        <taxon>Euteleostomi</taxon>
        <taxon>Mammalia</taxon>
        <taxon>Eutheria</taxon>
        <taxon>Laurasiatheria</taxon>
        <taxon>Artiodactyla</taxon>
        <taxon>Ruminantia</taxon>
        <taxon>Pecora</taxon>
        <taxon>Bovidae</taxon>
        <taxon>Bovinae</taxon>
        <taxon>Bos</taxon>
    </lineage>
</organism>
<gene>
    <name type="primary">TBCA</name>
</gene>
<feature type="initiator methionine" description="Removed" evidence="1">
    <location>
        <position position="1"/>
    </location>
</feature>
<feature type="chain" id="PRO_0000080038" description="Tubulin-specific chaperone A">
    <location>
        <begin position="2"/>
        <end position="108"/>
    </location>
</feature>
<feature type="modified residue" description="N-acetylalanine" evidence="1">
    <location>
        <position position="2"/>
    </location>
</feature>